<name>RHMA_SALA4</name>
<sequence length="267" mass="28727">MNALLSNPFKEGLRKGDTQIGLWLSSTTSYMAEIAATSGYDWLLIDGEHAPNTVQDLYHQLQAIAPYASQPVIRPIEGSKALIKQVLDIGAQTLLIPMVDTAEQARQVVSATRYPPLGQRGVGASVARAARWGRIDNYMAQANESLCLLVQVESKVALENLDAILEVEGIDGVFIGPADLSASLGYPDNAGHPEVQRIIEACIYRIRAAGKAAGFLAVDPAMAQKCLAWGANFVAVGVDTMLYTEALDSRLAMFKSVQSVSTAKRSY</sequence>
<evidence type="ECO:0000255" key="1">
    <source>
        <dbReference type="HAMAP-Rule" id="MF_01290"/>
    </source>
</evidence>
<proteinExistence type="inferred from homology"/>
<reference key="1">
    <citation type="journal article" date="2011" name="J. Bacteriol.">
        <title>Comparative genomics of 28 Salmonella enterica isolates: evidence for CRISPR-mediated adaptive sublineage evolution.</title>
        <authorList>
            <person name="Fricke W.F."/>
            <person name="Mammel M.K."/>
            <person name="McDermott P.F."/>
            <person name="Tartera C."/>
            <person name="White D.G."/>
            <person name="Leclerc J.E."/>
            <person name="Ravel J."/>
            <person name="Cebula T.A."/>
        </authorList>
    </citation>
    <scope>NUCLEOTIDE SEQUENCE [LARGE SCALE GENOMIC DNA]</scope>
    <source>
        <strain>SL483</strain>
    </source>
</reference>
<gene>
    <name evidence="1" type="primary">rhmA</name>
    <name type="ordered locus">SeAg_B2425</name>
</gene>
<feature type="chain" id="PRO_1000140396" description="2-keto-3-deoxy-L-rhamnonate aldolase">
    <location>
        <begin position="1"/>
        <end position="267"/>
    </location>
</feature>
<feature type="active site" description="Proton acceptor" evidence="1">
    <location>
        <position position="49"/>
    </location>
</feature>
<feature type="binding site" evidence="1">
    <location>
        <position position="151"/>
    </location>
    <ligand>
        <name>substrate</name>
    </ligand>
</feature>
<feature type="binding site" evidence="1">
    <location>
        <position position="153"/>
    </location>
    <ligand>
        <name>Mg(2+)</name>
        <dbReference type="ChEBI" id="CHEBI:18420"/>
    </ligand>
</feature>
<feature type="binding site" evidence="1">
    <location>
        <position position="178"/>
    </location>
    <ligand>
        <name>substrate</name>
    </ligand>
</feature>
<feature type="binding site" evidence="1">
    <location>
        <position position="179"/>
    </location>
    <ligand>
        <name>Mg(2+)</name>
        <dbReference type="ChEBI" id="CHEBI:18420"/>
    </ligand>
</feature>
<feature type="binding site" evidence="1">
    <location>
        <position position="179"/>
    </location>
    <ligand>
        <name>substrate</name>
    </ligand>
</feature>
<feature type="site" description="Transition state stabilizer" evidence="1">
    <location>
        <position position="74"/>
    </location>
</feature>
<feature type="site" description="Increases basicity of active site His" evidence="1">
    <location>
        <position position="88"/>
    </location>
</feature>
<organism>
    <name type="scientific">Salmonella agona (strain SL483)</name>
    <dbReference type="NCBI Taxonomy" id="454166"/>
    <lineage>
        <taxon>Bacteria</taxon>
        <taxon>Pseudomonadati</taxon>
        <taxon>Pseudomonadota</taxon>
        <taxon>Gammaproteobacteria</taxon>
        <taxon>Enterobacterales</taxon>
        <taxon>Enterobacteriaceae</taxon>
        <taxon>Salmonella</taxon>
    </lineage>
</organism>
<protein>
    <recommendedName>
        <fullName evidence="1">2-keto-3-deoxy-L-rhamnonate aldolase</fullName>
        <shortName evidence="1">KDR aldolase</shortName>
        <ecNumber evidence="1">4.1.2.53</ecNumber>
    </recommendedName>
    <alternativeName>
        <fullName evidence="1">2-dehydro-3-deoxyrhamnonate aldolase</fullName>
    </alternativeName>
</protein>
<dbReference type="EC" id="4.1.2.53" evidence="1"/>
<dbReference type="EMBL" id="CP001138">
    <property type="protein sequence ID" value="ACH51513.1"/>
    <property type="molecule type" value="Genomic_DNA"/>
</dbReference>
<dbReference type="SMR" id="B5EZG8"/>
<dbReference type="KEGG" id="sea:SeAg_B2425"/>
<dbReference type="HOGENOM" id="CLU_059964_1_0_6"/>
<dbReference type="Proteomes" id="UP000008819">
    <property type="component" value="Chromosome"/>
</dbReference>
<dbReference type="GO" id="GO:0005737">
    <property type="term" value="C:cytoplasm"/>
    <property type="evidence" value="ECO:0007669"/>
    <property type="project" value="TreeGrafter"/>
</dbReference>
<dbReference type="GO" id="GO:0106099">
    <property type="term" value="F:2-keto-3-deoxy-L-rhamnonate aldolase activity"/>
    <property type="evidence" value="ECO:0007669"/>
    <property type="project" value="UniProtKB-EC"/>
</dbReference>
<dbReference type="GO" id="GO:0000287">
    <property type="term" value="F:magnesium ion binding"/>
    <property type="evidence" value="ECO:0007669"/>
    <property type="project" value="UniProtKB-UniRule"/>
</dbReference>
<dbReference type="FunFam" id="3.20.20.60:FF:000004">
    <property type="entry name" value="5-keto-4-deoxy-D-glucarate aldolase"/>
    <property type="match status" value="1"/>
</dbReference>
<dbReference type="Gene3D" id="3.20.20.60">
    <property type="entry name" value="Phosphoenolpyruvate-binding domains"/>
    <property type="match status" value="1"/>
</dbReference>
<dbReference type="HAMAP" id="MF_01290">
    <property type="entry name" value="KDR_aldolase"/>
    <property type="match status" value="1"/>
</dbReference>
<dbReference type="InterPro" id="IPR005000">
    <property type="entry name" value="Aldolase/citrate-lyase_domain"/>
</dbReference>
<dbReference type="InterPro" id="IPR050251">
    <property type="entry name" value="HpcH-HpaI_aldolase"/>
</dbReference>
<dbReference type="InterPro" id="IPR023593">
    <property type="entry name" value="KDR_aldolase"/>
</dbReference>
<dbReference type="InterPro" id="IPR015813">
    <property type="entry name" value="Pyrv/PenolPyrv_kinase-like_dom"/>
</dbReference>
<dbReference type="InterPro" id="IPR040442">
    <property type="entry name" value="Pyrv_kinase-like_dom_sf"/>
</dbReference>
<dbReference type="NCBIfam" id="NF007521">
    <property type="entry name" value="PRK10128.1"/>
    <property type="match status" value="1"/>
</dbReference>
<dbReference type="PANTHER" id="PTHR30502">
    <property type="entry name" value="2-KETO-3-DEOXY-L-RHAMNONATE ALDOLASE"/>
    <property type="match status" value="1"/>
</dbReference>
<dbReference type="PANTHER" id="PTHR30502:SF5">
    <property type="entry name" value="2-KETO-3-DEOXY-L-RHAMNONATE ALDOLASE"/>
    <property type="match status" value="1"/>
</dbReference>
<dbReference type="Pfam" id="PF03328">
    <property type="entry name" value="HpcH_HpaI"/>
    <property type="match status" value="1"/>
</dbReference>
<dbReference type="SUPFAM" id="SSF51621">
    <property type="entry name" value="Phosphoenolpyruvate/pyruvate domain"/>
    <property type="match status" value="1"/>
</dbReference>
<comment type="function">
    <text evidence="1">Catalyzes the reversible retro-aldol cleavage of 2-keto-3-deoxy-L-rhamnonate (KDR) to pyruvate and lactaldehyde.</text>
</comment>
<comment type="catalytic activity">
    <reaction evidence="1">
        <text>2-dehydro-3-deoxy-L-rhamnonate = (S)-lactaldehyde + pyruvate</text>
        <dbReference type="Rhea" id="RHEA:25784"/>
        <dbReference type="ChEBI" id="CHEBI:15361"/>
        <dbReference type="ChEBI" id="CHEBI:18041"/>
        <dbReference type="ChEBI" id="CHEBI:58371"/>
        <dbReference type="EC" id="4.1.2.53"/>
    </reaction>
</comment>
<comment type="cofactor">
    <cofactor evidence="1">
        <name>Mg(2+)</name>
        <dbReference type="ChEBI" id="CHEBI:18420"/>
    </cofactor>
    <text evidence="1">Binds 1 Mg(2+) ion per subunit.</text>
</comment>
<comment type="subunit">
    <text evidence="1">Homohexamer.</text>
</comment>
<comment type="similarity">
    <text evidence="1">Belongs to the HpcH/HpaI aldolase family. KDR aldolase subfamily.</text>
</comment>
<keyword id="KW-0456">Lyase</keyword>
<keyword id="KW-0460">Magnesium</keyword>
<keyword id="KW-0479">Metal-binding</keyword>
<accession>B5EZG8</accession>